<sequence>MRRGLVKDPDNADLFCKEDPERIFVDLHEIGHGSFGAVYFATNSTTNEIVAVKKMSYSGKQMNEKWQDIIKEVKFLQQLKHPNTIEYKGCYLKDHTAWLVMEYCLGSASDLLEVHKKPLQEVEIAAITHGALQGLAYLHSHNMIHRDIKAGNILLTEPGQVKLADFGSASKSSPANSFVGTPYWMAPEVILAMDEGQYDGKIDIWSLGITCIELAERKPPLFNMNAMSALYHIAQNESPTLQSNEWTDSFKGFVDYCLQKLPQERPASLELLRHDFVWRERPARVLIDLIQRTKDAVRELDNLQYRKMKKILFQESRNGPLNESQEDDEDSEHGTSLTRKMDSLGSNHSIPSTSVSTGSQSSSVNSIQEVMEDGSPDLIMSFSCSFDSTSSLVHKKDHAFIRDEADHRDPRPELRPTQSVQSQALHYRTRERFATIKSASLVTRQIHEHEQENELREQMSGYKRMRRQHQKQLIALENKLKAEMDEHRLKLQKEVETHANNASIELEKLSKRQFVGMDKEAKVAAADERRFQQQIIAQQKKDLTSFLESQKKQYKICKEKIKEELNEDHSTPKKEKQERISKHKENLQHTQAEEEAQLLSQQRLYYEKNCRLFKRKIMIKRHEVEQQHIREELNKKRTQKEMEHAMLIRQDESTRELEYRQLQMLQKLRMDLIRLQHQTELENQLEYNKRRERELHRKHVMELRQQPKNLKVMEMQIKKQFQDTCKVQTKQYKALKNHQLEVSPKCEHKTILKSLKDEQTRKLAILAEQYEQSINEMMASQALRLDEAQEAECQALRQQLQQEMELLNAYQSKIKMQTEAQHERELQKLEQRVSLRRAHLEQKIEEELVALQKERSERIKHLFERQEREIETFDMESLRMGFGNLVTLEYPKEDYR</sequence>
<feature type="chain" id="PRO_0000086742" description="Serine/threonine-protein kinase TAO3">
    <location>
        <begin position="1"/>
        <end position="896"/>
    </location>
</feature>
<feature type="domain" description="Protein kinase" evidence="3">
    <location>
        <begin position="24"/>
        <end position="277"/>
    </location>
</feature>
<feature type="region of interest" description="Disordered" evidence="5">
    <location>
        <begin position="316"/>
        <end position="366"/>
    </location>
</feature>
<feature type="region of interest" description="Disordered" evidence="5">
    <location>
        <begin position="403"/>
        <end position="423"/>
    </location>
</feature>
<feature type="region of interest" description="Disordered" evidence="5">
    <location>
        <begin position="565"/>
        <end position="593"/>
    </location>
</feature>
<feature type="coiled-coil region" evidence="2">
    <location>
        <begin position="450"/>
        <end position="513"/>
    </location>
</feature>
<feature type="coiled-coil region" evidence="2">
    <location>
        <begin position="545"/>
        <end position="650"/>
    </location>
</feature>
<feature type="coiled-coil region" evidence="2">
    <location>
        <begin position="752"/>
        <end position="873"/>
    </location>
</feature>
<feature type="compositionally biased region" description="Polar residues" evidence="5">
    <location>
        <begin position="334"/>
        <end position="348"/>
    </location>
</feature>
<feature type="compositionally biased region" description="Low complexity" evidence="5">
    <location>
        <begin position="349"/>
        <end position="366"/>
    </location>
</feature>
<feature type="compositionally biased region" description="Basic and acidic residues" evidence="5">
    <location>
        <begin position="403"/>
        <end position="414"/>
    </location>
</feature>
<feature type="compositionally biased region" description="Basic and acidic residues" evidence="5">
    <location>
        <begin position="565"/>
        <end position="587"/>
    </location>
</feature>
<feature type="active site" description="Proton acceptor" evidence="3 4">
    <location>
        <position position="147"/>
    </location>
</feature>
<feature type="binding site" evidence="3">
    <location>
        <begin position="30"/>
        <end position="38"/>
    </location>
    <ligand>
        <name>ATP</name>
        <dbReference type="ChEBI" id="CHEBI:30616"/>
    </ligand>
</feature>
<feature type="binding site" evidence="3">
    <location>
        <position position="53"/>
    </location>
    <ligand>
        <name>ATP</name>
        <dbReference type="ChEBI" id="CHEBI:30616"/>
    </ligand>
</feature>
<comment type="function">
    <text evidence="1">Serine/threonine-protein kinase that acts as a regulator of the p38/MAPK14 stress-activated MAPK cascade and of the MAPK8/JNK cascade. In response to DNA damage, involved in the G2/M transition DNA damage checkpoint by activating the p38/MAPK14 stress-activated MAPK cascade, probably by mediating phosphorylation of upstream MAP kinase kinases. Inhibits basal activity of the MAPK8/JNK cascade.</text>
</comment>
<comment type="catalytic activity">
    <reaction>
        <text>L-seryl-[protein] + ATP = O-phospho-L-seryl-[protein] + ADP + H(+)</text>
        <dbReference type="Rhea" id="RHEA:17989"/>
        <dbReference type="Rhea" id="RHEA-COMP:9863"/>
        <dbReference type="Rhea" id="RHEA-COMP:11604"/>
        <dbReference type="ChEBI" id="CHEBI:15378"/>
        <dbReference type="ChEBI" id="CHEBI:29999"/>
        <dbReference type="ChEBI" id="CHEBI:30616"/>
        <dbReference type="ChEBI" id="CHEBI:83421"/>
        <dbReference type="ChEBI" id="CHEBI:456216"/>
        <dbReference type="EC" id="2.7.11.1"/>
    </reaction>
</comment>
<comment type="catalytic activity">
    <reaction>
        <text>L-threonyl-[protein] + ATP = O-phospho-L-threonyl-[protein] + ADP + H(+)</text>
        <dbReference type="Rhea" id="RHEA:46608"/>
        <dbReference type="Rhea" id="RHEA-COMP:11060"/>
        <dbReference type="Rhea" id="RHEA-COMP:11605"/>
        <dbReference type="ChEBI" id="CHEBI:15378"/>
        <dbReference type="ChEBI" id="CHEBI:30013"/>
        <dbReference type="ChEBI" id="CHEBI:30616"/>
        <dbReference type="ChEBI" id="CHEBI:61977"/>
        <dbReference type="ChEBI" id="CHEBI:456216"/>
        <dbReference type="EC" id="2.7.11.1"/>
    </reaction>
</comment>
<comment type="subcellular location">
    <subcellularLocation>
        <location evidence="1">Cytoplasm</location>
    </subcellularLocation>
    <subcellularLocation>
        <location evidence="1">Cell membrane</location>
        <topology evidence="1">Peripheral membrane protein</topology>
    </subcellularLocation>
    <subcellularLocation>
        <location evidence="1">Membrane raft</location>
    </subcellularLocation>
    <subcellularLocation>
        <location evidence="1">Lipid droplet</location>
    </subcellularLocation>
</comment>
<comment type="similarity">
    <text evidence="6">Belongs to the protein kinase superfamily. STE Ser/Thr protein kinase family. STE20 subfamily.</text>
</comment>
<gene>
    <name type="primary">taok3</name>
</gene>
<name>TAOK3_XENLA</name>
<protein>
    <recommendedName>
        <fullName>Serine/threonine-protein kinase TAO3</fullName>
        <ecNumber>2.7.11.1</ecNumber>
    </recommendedName>
    <alternativeName>
        <fullName>Thousand and one amino acid protein 3</fullName>
    </alternativeName>
</protein>
<proteinExistence type="evidence at transcript level"/>
<evidence type="ECO:0000250" key="1">
    <source>
        <dbReference type="UniProtKB" id="Q9H2K8"/>
    </source>
</evidence>
<evidence type="ECO:0000255" key="2"/>
<evidence type="ECO:0000255" key="3">
    <source>
        <dbReference type="PROSITE-ProRule" id="PRU00159"/>
    </source>
</evidence>
<evidence type="ECO:0000255" key="4">
    <source>
        <dbReference type="PROSITE-ProRule" id="PRU10027"/>
    </source>
</evidence>
<evidence type="ECO:0000256" key="5">
    <source>
        <dbReference type="SAM" id="MobiDB-lite"/>
    </source>
</evidence>
<evidence type="ECO:0000305" key="6"/>
<organism>
    <name type="scientific">Xenopus laevis</name>
    <name type="common">African clawed frog</name>
    <dbReference type="NCBI Taxonomy" id="8355"/>
    <lineage>
        <taxon>Eukaryota</taxon>
        <taxon>Metazoa</taxon>
        <taxon>Chordata</taxon>
        <taxon>Craniata</taxon>
        <taxon>Vertebrata</taxon>
        <taxon>Euteleostomi</taxon>
        <taxon>Amphibia</taxon>
        <taxon>Batrachia</taxon>
        <taxon>Anura</taxon>
        <taxon>Pipoidea</taxon>
        <taxon>Pipidae</taxon>
        <taxon>Xenopodinae</taxon>
        <taxon>Xenopus</taxon>
        <taxon>Xenopus</taxon>
    </lineage>
</organism>
<accession>Q6DD27</accession>
<keyword id="KW-0067">ATP-binding</keyword>
<keyword id="KW-1003">Cell membrane</keyword>
<keyword id="KW-0175">Coiled coil</keyword>
<keyword id="KW-0963">Cytoplasm</keyword>
<keyword id="KW-0227">DNA damage</keyword>
<keyword id="KW-0234">DNA repair</keyword>
<keyword id="KW-0418">Kinase</keyword>
<keyword id="KW-0551">Lipid droplet</keyword>
<keyword id="KW-0472">Membrane</keyword>
<keyword id="KW-0547">Nucleotide-binding</keyword>
<keyword id="KW-1185">Reference proteome</keyword>
<keyword id="KW-0723">Serine/threonine-protein kinase</keyword>
<keyword id="KW-0808">Transferase</keyword>
<dbReference type="EC" id="2.7.11.1"/>
<dbReference type="EMBL" id="BC077802">
    <property type="protein sequence ID" value="AAH77802.1"/>
    <property type="molecule type" value="mRNA"/>
</dbReference>
<dbReference type="RefSeq" id="NP_001086943.1">
    <property type="nucleotide sequence ID" value="NM_001093474.1"/>
</dbReference>
<dbReference type="SMR" id="Q6DD27"/>
<dbReference type="IntAct" id="Q6DD27">
    <property type="interactions" value="1"/>
</dbReference>
<dbReference type="GeneID" id="446778"/>
<dbReference type="KEGG" id="xla:446778"/>
<dbReference type="AGR" id="Xenbase:XB-GENE-978581"/>
<dbReference type="CTD" id="446778"/>
<dbReference type="Xenbase" id="XB-GENE-978581">
    <property type="gene designation" value="taok3.L"/>
</dbReference>
<dbReference type="OrthoDB" id="10016527at2759"/>
<dbReference type="Proteomes" id="UP000186698">
    <property type="component" value="Chromosome 1L"/>
</dbReference>
<dbReference type="Bgee" id="446778">
    <property type="expression patterns" value="Expressed in intestine and 19 other cell types or tissues"/>
</dbReference>
<dbReference type="GO" id="GO:0005737">
    <property type="term" value="C:cytoplasm"/>
    <property type="evidence" value="ECO:0000318"/>
    <property type="project" value="GO_Central"/>
</dbReference>
<dbReference type="GO" id="GO:0005524">
    <property type="term" value="F:ATP binding"/>
    <property type="evidence" value="ECO:0007669"/>
    <property type="project" value="UniProtKB-KW"/>
</dbReference>
<dbReference type="GO" id="GO:0106310">
    <property type="term" value="F:protein serine kinase activity"/>
    <property type="evidence" value="ECO:0007669"/>
    <property type="project" value="RHEA"/>
</dbReference>
<dbReference type="GO" id="GO:0004674">
    <property type="term" value="F:protein serine/threonine kinase activity"/>
    <property type="evidence" value="ECO:0000318"/>
    <property type="project" value="GO_Central"/>
</dbReference>
<dbReference type="GO" id="GO:0006974">
    <property type="term" value="P:DNA damage response"/>
    <property type="evidence" value="ECO:0000250"/>
    <property type="project" value="UniProtKB"/>
</dbReference>
<dbReference type="GO" id="GO:0006281">
    <property type="term" value="P:DNA repair"/>
    <property type="evidence" value="ECO:0007669"/>
    <property type="project" value="UniProtKB-KW"/>
</dbReference>
<dbReference type="GO" id="GO:0007095">
    <property type="term" value="P:mitotic G2 DNA damage checkpoint signaling"/>
    <property type="evidence" value="ECO:0000250"/>
    <property type="project" value="UniProtKB"/>
</dbReference>
<dbReference type="GO" id="GO:0046330">
    <property type="term" value="P:positive regulation of JNK cascade"/>
    <property type="evidence" value="ECO:0000318"/>
    <property type="project" value="GO_Central"/>
</dbReference>
<dbReference type="GO" id="GO:0032874">
    <property type="term" value="P:positive regulation of stress-activated MAPK cascade"/>
    <property type="evidence" value="ECO:0000250"/>
    <property type="project" value="UniProtKB"/>
</dbReference>
<dbReference type="GO" id="GO:0051493">
    <property type="term" value="P:regulation of cytoskeleton organization"/>
    <property type="evidence" value="ECO:0000318"/>
    <property type="project" value="GO_Central"/>
</dbReference>
<dbReference type="CDD" id="cd06633">
    <property type="entry name" value="STKc_TAO3"/>
    <property type="match status" value="1"/>
</dbReference>
<dbReference type="FunFam" id="1.10.510.10:FF:000030">
    <property type="entry name" value="Serine/threonine-protein kinase TAO2, putative"/>
    <property type="match status" value="1"/>
</dbReference>
<dbReference type="FunFam" id="3.30.200.20:FF:000029">
    <property type="entry name" value="Serine/threonine-protein kinase TAO2, putative"/>
    <property type="match status" value="1"/>
</dbReference>
<dbReference type="Gene3D" id="3.30.200.20">
    <property type="entry name" value="Phosphorylase Kinase, domain 1"/>
    <property type="match status" value="1"/>
</dbReference>
<dbReference type="Gene3D" id="1.10.510.10">
    <property type="entry name" value="Transferase(Phosphotransferase) domain 1"/>
    <property type="match status" value="1"/>
</dbReference>
<dbReference type="InterPro" id="IPR011009">
    <property type="entry name" value="Kinase-like_dom_sf"/>
</dbReference>
<dbReference type="InterPro" id="IPR000719">
    <property type="entry name" value="Prot_kinase_dom"/>
</dbReference>
<dbReference type="InterPro" id="IPR017441">
    <property type="entry name" value="Protein_kinase_ATP_BS"/>
</dbReference>
<dbReference type="InterPro" id="IPR008271">
    <property type="entry name" value="Ser/Thr_kinase_AS"/>
</dbReference>
<dbReference type="InterPro" id="IPR051234">
    <property type="entry name" value="TAO_STE20_kinase"/>
</dbReference>
<dbReference type="PANTHER" id="PTHR47167">
    <property type="entry name" value="SERINE/THREONINE-PROTEIN KINASE TAO1-LIKE PROTEIN"/>
    <property type="match status" value="1"/>
</dbReference>
<dbReference type="PANTHER" id="PTHR47167:SF10">
    <property type="entry name" value="SERINE_THREONINE-PROTEIN KINASE TAO3"/>
    <property type="match status" value="1"/>
</dbReference>
<dbReference type="Pfam" id="PF00069">
    <property type="entry name" value="Pkinase"/>
    <property type="match status" value="1"/>
</dbReference>
<dbReference type="SMART" id="SM00220">
    <property type="entry name" value="S_TKc"/>
    <property type="match status" value="1"/>
</dbReference>
<dbReference type="SUPFAM" id="SSF56112">
    <property type="entry name" value="Protein kinase-like (PK-like)"/>
    <property type="match status" value="1"/>
</dbReference>
<dbReference type="PROSITE" id="PS00107">
    <property type="entry name" value="PROTEIN_KINASE_ATP"/>
    <property type="match status" value="1"/>
</dbReference>
<dbReference type="PROSITE" id="PS50011">
    <property type="entry name" value="PROTEIN_KINASE_DOM"/>
    <property type="match status" value="1"/>
</dbReference>
<dbReference type="PROSITE" id="PS00108">
    <property type="entry name" value="PROTEIN_KINASE_ST"/>
    <property type="match status" value="1"/>
</dbReference>
<reference key="1">
    <citation type="submission" date="2004-07" db="EMBL/GenBank/DDBJ databases">
        <authorList>
            <consortium name="NIH - Xenopus Gene Collection (XGC) project"/>
        </authorList>
    </citation>
    <scope>NUCLEOTIDE SEQUENCE [LARGE SCALE MRNA]</scope>
    <source>
        <tissue>Embryo</tissue>
    </source>
</reference>